<dbReference type="EMBL" id="CP000283">
    <property type="protein sequence ID" value="ABE40310.1"/>
    <property type="molecule type" value="Genomic_DNA"/>
</dbReference>
<dbReference type="SMR" id="Q135C9"/>
<dbReference type="STRING" id="316057.RPD_3084"/>
<dbReference type="KEGG" id="rpd:RPD_3084"/>
<dbReference type="eggNOG" id="COG1742">
    <property type="taxonomic scope" value="Bacteria"/>
</dbReference>
<dbReference type="HOGENOM" id="CLU_117653_1_0_5"/>
<dbReference type="BioCyc" id="RPAL316057:RPD_RS15490-MONOMER"/>
<dbReference type="Proteomes" id="UP000001818">
    <property type="component" value="Chromosome"/>
</dbReference>
<dbReference type="GO" id="GO:0005886">
    <property type="term" value="C:plasma membrane"/>
    <property type="evidence" value="ECO:0007669"/>
    <property type="project" value="UniProtKB-SubCell"/>
</dbReference>
<dbReference type="HAMAP" id="MF_00010">
    <property type="entry name" value="UPF0060"/>
    <property type="match status" value="1"/>
</dbReference>
<dbReference type="InterPro" id="IPR003844">
    <property type="entry name" value="UPF0060"/>
</dbReference>
<dbReference type="NCBIfam" id="NF002586">
    <property type="entry name" value="PRK02237.1"/>
    <property type="match status" value="1"/>
</dbReference>
<dbReference type="PANTHER" id="PTHR36116">
    <property type="entry name" value="UPF0060 MEMBRANE PROTEIN YNFA"/>
    <property type="match status" value="1"/>
</dbReference>
<dbReference type="PANTHER" id="PTHR36116:SF1">
    <property type="entry name" value="UPF0060 MEMBRANE PROTEIN YNFA"/>
    <property type="match status" value="1"/>
</dbReference>
<dbReference type="Pfam" id="PF02694">
    <property type="entry name" value="UPF0060"/>
    <property type="match status" value="1"/>
</dbReference>
<dbReference type="SUPFAM" id="SSF103481">
    <property type="entry name" value="Multidrug resistance efflux transporter EmrE"/>
    <property type="match status" value="1"/>
</dbReference>
<reference key="1">
    <citation type="submission" date="2006-03" db="EMBL/GenBank/DDBJ databases">
        <title>Complete sequence of Rhodopseudomonas palustris BisB5.</title>
        <authorList>
            <consortium name="US DOE Joint Genome Institute"/>
            <person name="Copeland A."/>
            <person name="Lucas S."/>
            <person name="Lapidus A."/>
            <person name="Barry K."/>
            <person name="Detter J.C."/>
            <person name="Glavina del Rio T."/>
            <person name="Hammon N."/>
            <person name="Israni S."/>
            <person name="Dalin E."/>
            <person name="Tice H."/>
            <person name="Pitluck S."/>
            <person name="Chain P."/>
            <person name="Malfatti S."/>
            <person name="Shin M."/>
            <person name="Vergez L."/>
            <person name="Schmutz J."/>
            <person name="Larimer F."/>
            <person name="Land M."/>
            <person name="Hauser L."/>
            <person name="Pelletier D.A."/>
            <person name="Kyrpides N."/>
            <person name="Lykidis A."/>
            <person name="Oda Y."/>
            <person name="Harwood C.S."/>
            <person name="Richardson P."/>
        </authorList>
    </citation>
    <scope>NUCLEOTIDE SEQUENCE [LARGE SCALE GENOMIC DNA]</scope>
    <source>
        <strain>BisB5</strain>
    </source>
</reference>
<comment type="subcellular location">
    <subcellularLocation>
        <location evidence="1">Cell inner membrane</location>
        <topology evidence="1">Multi-pass membrane protein</topology>
    </subcellularLocation>
</comment>
<comment type="similarity">
    <text evidence="1">Belongs to the UPF0060 family.</text>
</comment>
<keyword id="KW-0997">Cell inner membrane</keyword>
<keyword id="KW-1003">Cell membrane</keyword>
<keyword id="KW-0472">Membrane</keyword>
<keyword id="KW-0812">Transmembrane</keyword>
<keyword id="KW-1133">Transmembrane helix</keyword>
<name>Y3084_RHOPS</name>
<sequence length="107" mass="11680">MKSPIIYVCAALAEIAGCFAFWGWLRLGKPVWWLLPGMLSLAAFAYLLTLVESQAAGRAYASYGGIYIVASLVWLWSVENVRPDRWDVTGGCVCLIGAAIILWGPRG</sequence>
<feature type="chain" id="PRO_0000282260" description="UPF0060 membrane protein RPD_3084">
    <location>
        <begin position="1"/>
        <end position="107"/>
    </location>
</feature>
<feature type="transmembrane region" description="Helical" evidence="1">
    <location>
        <begin position="5"/>
        <end position="25"/>
    </location>
</feature>
<feature type="transmembrane region" description="Helical" evidence="1">
    <location>
        <begin position="31"/>
        <end position="51"/>
    </location>
</feature>
<feature type="transmembrane region" description="Helical" evidence="1">
    <location>
        <begin position="59"/>
        <end position="79"/>
    </location>
</feature>
<feature type="transmembrane region" description="Helical" evidence="1">
    <location>
        <begin position="85"/>
        <end position="105"/>
    </location>
</feature>
<evidence type="ECO:0000255" key="1">
    <source>
        <dbReference type="HAMAP-Rule" id="MF_00010"/>
    </source>
</evidence>
<proteinExistence type="inferred from homology"/>
<gene>
    <name type="ordered locus">RPD_3084</name>
</gene>
<accession>Q135C9</accession>
<organism>
    <name type="scientific">Rhodopseudomonas palustris (strain BisB5)</name>
    <dbReference type="NCBI Taxonomy" id="316057"/>
    <lineage>
        <taxon>Bacteria</taxon>
        <taxon>Pseudomonadati</taxon>
        <taxon>Pseudomonadota</taxon>
        <taxon>Alphaproteobacteria</taxon>
        <taxon>Hyphomicrobiales</taxon>
        <taxon>Nitrobacteraceae</taxon>
        <taxon>Rhodopseudomonas</taxon>
    </lineage>
</organism>
<protein>
    <recommendedName>
        <fullName evidence="1">UPF0060 membrane protein RPD_3084</fullName>
    </recommendedName>
</protein>